<evidence type="ECO:0000250" key="1"/>
<evidence type="ECO:0000255" key="2">
    <source>
        <dbReference type="PROSITE-ProRule" id="PRU00538"/>
    </source>
</evidence>
<evidence type="ECO:0000269" key="3">
    <source>
    </source>
</evidence>
<evidence type="ECO:0000269" key="4">
    <source>
    </source>
</evidence>
<evidence type="ECO:0000305" key="5"/>
<feature type="chain" id="PRO_0000202630" description="JmjC domain-containing histone demethylation protein 1">
    <location>
        <begin position="1"/>
        <end position="492"/>
    </location>
</feature>
<feature type="domain" description="JmjC" evidence="2">
    <location>
        <begin position="254"/>
        <end position="409"/>
    </location>
</feature>
<feature type="zinc finger region" description="PHD-type; atypical">
    <location>
        <begin position="4"/>
        <end position="72"/>
    </location>
</feature>
<feature type="binding site" evidence="1">
    <location>
        <position position="302"/>
    </location>
    <ligand>
        <name>substrate</name>
    </ligand>
</feature>
<feature type="binding site" evidence="5">
    <location>
        <position position="305"/>
    </location>
    <ligand>
        <name>Fe cation</name>
        <dbReference type="ChEBI" id="CHEBI:24875"/>
        <note>catalytic</note>
    </ligand>
</feature>
<feature type="binding site" evidence="2">
    <location>
        <position position="307"/>
    </location>
    <ligand>
        <name>Fe cation</name>
        <dbReference type="ChEBI" id="CHEBI:24875"/>
        <note>catalytic</note>
    </ligand>
</feature>
<feature type="binding site" evidence="1">
    <location>
        <position position="322"/>
    </location>
    <ligand>
        <name>substrate</name>
    </ligand>
</feature>
<feature type="binding site" evidence="2">
    <location>
        <position position="377"/>
    </location>
    <ligand>
        <name>Fe cation</name>
        <dbReference type="ChEBI" id="CHEBI:24875"/>
        <note>catalytic</note>
    </ligand>
</feature>
<feature type="mutagenesis site" description="Abolishes histone demethylase activity." evidence="4">
    <original>H</original>
    <variation>A</variation>
    <location>
        <position position="305"/>
    </location>
</feature>
<keyword id="KW-0156">Chromatin regulator</keyword>
<keyword id="KW-0223">Dioxygenase</keyword>
<keyword id="KW-0408">Iron</keyword>
<keyword id="KW-0479">Metal-binding</keyword>
<keyword id="KW-0539">Nucleus</keyword>
<keyword id="KW-0560">Oxidoreductase</keyword>
<keyword id="KW-1185">Reference proteome</keyword>
<keyword id="KW-0804">Transcription</keyword>
<keyword id="KW-0805">Transcription regulation</keyword>
<keyword id="KW-0862">Zinc</keyword>
<keyword id="KW-0863">Zinc-finger</keyword>
<organism>
    <name type="scientific">Saccharomyces cerevisiae (strain ATCC 204508 / S288c)</name>
    <name type="common">Baker's yeast</name>
    <dbReference type="NCBI Taxonomy" id="559292"/>
    <lineage>
        <taxon>Eukaryota</taxon>
        <taxon>Fungi</taxon>
        <taxon>Dikarya</taxon>
        <taxon>Ascomycota</taxon>
        <taxon>Saccharomycotina</taxon>
        <taxon>Saccharomycetes</taxon>
        <taxon>Saccharomycetales</taxon>
        <taxon>Saccharomycetaceae</taxon>
        <taxon>Saccharomyces</taxon>
    </lineage>
</organism>
<reference key="1">
    <citation type="journal article" date="1997" name="Nature">
        <title>The nucleotide sequence of Saccharomyces cerevisiae chromosome V.</title>
        <authorList>
            <person name="Dietrich F.S."/>
            <person name="Mulligan J.T."/>
            <person name="Hennessy K.M."/>
            <person name="Yelton M.A."/>
            <person name="Allen E."/>
            <person name="Araujo R."/>
            <person name="Aviles E."/>
            <person name="Berno A."/>
            <person name="Brennan T."/>
            <person name="Carpenter J."/>
            <person name="Chen E."/>
            <person name="Cherry J.M."/>
            <person name="Chung E."/>
            <person name="Duncan M."/>
            <person name="Guzman E."/>
            <person name="Hartzell G."/>
            <person name="Hunicke-Smith S."/>
            <person name="Hyman R.W."/>
            <person name="Kayser A."/>
            <person name="Komp C."/>
            <person name="Lashkari D."/>
            <person name="Lew H."/>
            <person name="Lin D."/>
            <person name="Mosedale D."/>
            <person name="Nakahara K."/>
            <person name="Namath A."/>
            <person name="Norgren R."/>
            <person name="Oefner P."/>
            <person name="Oh C."/>
            <person name="Petel F.X."/>
            <person name="Roberts D."/>
            <person name="Sehl P."/>
            <person name="Schramm S."/>
            <person name="Shogren T."/>
            <person name="Smith V."/>
            <person name="Taylor P."/>
            <person name="Wei Y."/>
            <person name="Botstein D."/>
            <person name="Davis R.W."/>
        </authorList>
    </citation>
    <scope>NUCLEOTIDE SEQUENCE [LARGE SCALE GENOMIC DNA]</scope>
    <source>
        <strain>ATCC 204508 / S288c</strain>
    </source>
</reference>
<reference key="2">
    <citation type="journal article" date="2014" name="G3 (Bethesda)">
        <title>The reference genome sequence of Saccharomyces cerevisiae: Then and now.</title>
        <authorList>
            <person name="Engel S.R."/>
            <person name="Dietrich F.S."/>
            <person name="Fisk D.G."/>
            <person name="Binkley G."/>
            <person name="Balakrishnan R."/>
            <person name="Costanzo M.C."/>
            <person name="Dwight S.S."/>
            <person name="Hitz B.C."/>
            <person name="Karra K."/>
            <person name="Nash R.S."/>
            <person name="Weng S."/>
            <person name="Wong E.D."/>
            <person name="Lloyd P."/>
            <person name="Skrzypek M.S."/>
            <person name="Miyasato S.R."/>
            <person name="Simison M."/>
            <person name="Cherry J.M."/>
        </authorList>
    </citation>
    <scope>GENOME REANNOTATION</scope>
    <source>
        <strain>ATCC 204508 / S288c</strain>
    </source>
</reference>
<reference key="3">
    <citation type="journal article" date="2003" name="Nature">
        <title>Global analysis of protein expression in yeast.</title>
        <authorList>
            <person name="Ghaemmaghami S."/>
            <person name="Huh W.-K."/>
            <person name="Bower K."/>
            <person name="Howson R.W."/>
            <person name="Belle A."/>
            <person name="Dephoure N."/>
            <person name="O'Shea E.K."/>
            <person name="Weissman J.S."/>
        </authorList>
    </citation>
    <scope>LEVEL OF PROTEIN EXPRESSION [LARGE SCALE ANALYSIS]</scope>
</reference>
<reference key="4">
    <citation type="journal article" date="2006" name="Nature">
        <title>Histone demethylation by a family of JmjC domain-containing proteins.</title>
        <authorList>
            <person name="Tsukada Y."/>
            <person name="Fang J."/>
            <person name="Erdjument-Bromage H."/>
            <person name="Warren M.E."/>
            <person name="Borchers C.H."/>
            <person name="Tempst P."/>
            <person name="Zhang Y."/>
        </authorList>
    </citation>
    <scope>FUNCTION</scope>
    <scope>CATALYTIC ACTIVITY</scope>
    <scope>MUTAGENESIS OF HIS-305</scope>
</reference>
<gene>
    <name type="primary">JHD1</name>
    <name type="ordered locus">YER051W</name>
</gene>
<dbReference type="EC" id="1.14.11.27" evidence="4"/>
<dbReference type="EMBL" id="U18796">
    <property type="protein sequence ID" value="AAB64586.1"/>
    <property type="molecule type" value="Genomic_DNA"/>
</dbReference>
<dbReference type="EMBL" id="BK006939">
    <property type="protein sequence ID" value="DAA07707.1"/>
    <property type="molecule type" value="Genomic_DNA"/>
</dbReference>
<dbReference type="PIR" id="S50554">
    <property type="entry name" value="S50554"/>
</dbReference>
<dbReference type="RefSeq" id="NP_010971.1">
    <property type="nucleotide sequence ID" value="NM_001178942.1"/>
</dbReference>
<dbReference type="SMR" id="P40034"/>
<dbReference type="BioGRID" id="36790">
    <property type="interactions" value="38"/>
</dbReference>
<dbReference type="DIP" id="DIP-5335N"/>
<dbReference type="FunCoup" id="P40034">
    <property type="interactions" value="25"/>
</dbReference>
<dbReference type="STRING" id="4932.YER051W"/>
<dbReference type="iPTMnet" id="P40034"/>
<dbReference type="PaxDb" id="4932-YER051W"/>
<dbReference type="PeptideAtlas" id="P40034"/>
<dbReference type="EnsemblFungi" id="YER051W_mRNA">
    <property type="protein sequence ID" value="YER051W"/>
    <property type="gene ID" value="YER051W"/>
</dbReference>
<dbReference type="GeneID" id="856777"/>
<dbReference type="KEGG" id="sce:YER051W"/>
<dbReference type="AGR" id="SGD:S000000853"/>
<dbReference type="SGD" id="S000000853">
    <property type="gene designation" value="JHD1"/>
</dbReference>
<dbReference type="VEuPathDB" id="FungiDB:YER051W"/>
<dbReference type="eggNOG" id="KOG1633">
    <property type="taxonomic scope" value="Eukaryota"/>
</dbReference>
<dbReference type="GeneTree" id="ENSGT01040000244400"/>
<dbReference type="HOGENOM" id="CLU_003540_6_2_1"/>
<dbReference type="InParanoid" id="P40034"/>
<dbReference type="OMA" id="SQQNERW"/>
<dbReference type="OrthoDB" id="5876800at2759"/>
<dbReference type="BioCyc" id="YEAST:G3O-30230-MONOMER"/>
<dbReference type="BRENDA" id="1.14.11.27">
    <property type="organism ID" value="984"/>
</dbReference>
<dbReference type="BioGRID-ORCS" id="856777">
    <property type="hits" value="0 hits in 10 CRISPR screens"/>
</dbReference>
<dbReference type="PRO" id="PR:P40034"/>
<dbReference type="Proteomes" id="UP000002311">
    <property type="component" value="Chromosome V"/>
</dbReference>
<dbReference type="RNAct" id="P40034">
    <property type="molecule type" value="protein"/>
</dbReference>
<dbReference type="GO" id="GO:0005634">
    <property type="term" value="C:nucleus"/>
    <property type="evidence" value="ECO:0007669"/>
    <property type="project" value="UniProtKB-SubCell"/>
</dbReference>
<dbReference type="GO" id="GO:0032452">
    <property type="term" value="F:histone demethylase activity"/>
    <property type="evidence" value="ECO:0000318"/>
    <property type="project" value="GO_Central"/>
</dbReference>
<dbReference type="GO" id="GO:0051864">
    <property type="term" value="F:histone H3K36 demethylase activity"/>
    <property type="evidence" value="ECO:0000314"/>
    <property type="project" value="SGD"/>
</dbReference>
<dbReference type="GO" id="GO:0140680">
    <property type="term" value="F:histone H3K36me/H3K36me2 demethylase activity"/>
    <property type="evidence" value="ECO:0007669"/>
    <property type="project" value="UniProtKB-EC"/>
</dbReference>
<dbReference type="GO" id="GO:0035064">
    <property type="term" value="F:methylated histone binding"/>
    <property type="evidence" value="ECO:0000314"/>
    <property type="project" value="SGD"/>
</dbReference>
<dbReference type="GO" id="GO:0003712">
    <property type="term" value="F:transcription coregulator activity"/>
    <property type="evidence" value="ECO:0000318"/>
    <property type="project" value="GO_Central"/>
</dbReference>
<dbReference type="GO" id="GO:0008270">
    <property type="term" value="F:zinc ion binding"/>
    <property type="evidence" value="ECO:0007669"/>
    <property type="project" value="UniProtKB-KW"/>
</dbReference>
<dbReference type="GO" id="GO:0006338">
    <property type="term" value="P:chromatin remodeling"/>
    <property type="evidence" value="ECO:0000318"/>
    <property type="project" value="GO_Central"/>
</dbReference>
<dbReference type="GO" id="GO:0032968">
    <property type="term" value="P:positive regulation of transcription elongation by RNA polymerase II"/>
    <property type="evidence" value="ECO:0000316"/>
    <property type="project" value="SGD"/>
</dbReference>
<dbReference type="GO" id="GO:0006357">
    <property type="term" value="P:regulation of transcription by RNA polymerase II"/>
    <property type="evidence" value="ECO:0000318"/>
    <property type="project" value="GO_Central"/>
</dbReference>
<dbReference type="CDD" id="cd15517">
    <property type="entry name" value="PHD_TCF19_like"/>
    <property type="match status" value="1"/>
</dbReference>
<dbReference type="FunFam" id="3.30.40.10:FF:000815">
    <property type="entry name" value="Histone H3-K36 demethylase"/>
    <property type="match status" value="1"/>
</dbReference>
<dbReference type="Gene3D" id="2.60.120.650">
    <property type="entry name" value="Cupin"/>
    <property type="match status" value="1"/>
</dbReference>
<dbReference type="Gene3D" id="3.30.40.10">
    <property type="entry name" value="Zinc/RING finger domain, C3HC4 (zinc finger)"/>
    <property type="match status" value="1"/>
</dbReference>
<dbReference type="InterPro" id="IPR050690">
    <property type="entry name" value="JHDM1_Histone_Demethylase"/>
</dbReference>
<dbReference type="InterPro" id="IPR003347">
    <property type="entry name" value="JmjC_dom"/>
</dbReference>
<dbReference type="InterPro" id="IPR011011">
    <property type="entry name" value="Znf_FYVE_PHD"/>
</dbReference>
<dbReference type="InterPro" id="IPR001965">
    <property type="entry name" value="Znf_PHD"/>
</dbReference>
<dbReference type="InterPro" id="IPR013083">
    <property type="entry name" value="Znf_RING/FYVE/PHD"/>
</dbReference>
<dbReference type="PANTHER" id="PTHR23123">
    <property type="entry name" value="PHD/F-BOX CONTAINING PROTEIN"/>
    <property type="match status" value="1"/>
</dbReference>
<dbReference type="SMART" id="SM00558">
    <property type="entry name" value="JmjC"/>
    <property type="match status" value="1"/>
</dbReference>
<dbReference type="SMART" id="SM00249">
    <property type="entry name" value="PHD"/>
    <property type="match status" value="1"/>
</dbReference>
<dbReference type="SUPFAM" id="SSF51197">
    <property type="entry name" value="Clavaminate synthase-like"/>
    <property type="match status" value="1"/>
</dbReference>
<dbReference type="SUPFAM" id="SSF57903">
    <property type="entry name" value="FYVE/PHD zinc finger"/>
    <property type="match status" value="1"/>
</dbReference>
<dbReference type="PROSITE" id="PS51184">
    <property type="entry name" value="JMJC"/>
    <property type="match status" value="1"/>
</dbReference>
<name>JHD1_YEAST</name>
<protein>
    <recommendedName>
        <fullName>JmjC domain-containing histone demethylation protein 1</fullName>
        <ecNumber evidence="4">1.14.11.27</ecNumber>
    </recommendedName>
    <alternativeName>
        <fullName>Jumonji/ARID domain-containing protein 1</fullName>
    </alternativeName>
    <alternativeName>
        <fullName>ScJHDM1</fullName>
    </alternativeName>
    <alternativeName>
        <fullName>[Histone-H3]-lysine-36 demethylase 1</fullName>
    </alternativeName>
</protein>
<accession>P40034</accession>
<accession>D3DLV3</accession>
<proteinExistence type="evidence at protein level"/>
<sequence length="492" mass="56530">MQDPNICQHCQLKDNPGALIWVKCDSCPQWVHVKCVPLKRIHYSNLTSSEVLSYPNSAKQIKSYRCPNHKEGEYLTAYALITQKGKRQRNKENPEDSHINKRYNFRKKKLLDYIALNEGESKRDKMNHPHKESFMKSFEKWKNGSNIINAADFAEKFDNIDVPYKIIDPLNSGVYVPNVGTDNGCLTVNYITEMIGEDYHVDVMDVQSQMNENWNLGSWNEYFTNTEPDRRDRIRNVISLEVSNIEGLELERPTAVRQNDLVDKIWSFNGHLEKVNGEKAEENDPKPKVTKYILMSVKDAYTDFHLDFAGTSVYYNVISGQKKFLLFPPTQSNIDKYIEWSLKEDQNSVFLGDILEDGIAMELDAGDLFMIPAGYIHAVYTPVDSLVFGGNFLTIRDLETHLKIVEIEKLTKVPRRFTFPKFDQVMGKLCEYLALDKNKITSDVSDGDLLSRTTNCAIQSLHAYVIKPEVKYKPLNFTSKKHLAKALADLIS</sequence>
<comment type="function">
    <text evidence="4">Histone demethylase that specifically demethylates 'Lys-36' of histone H3, thereby playing a central role in histone code. Does not demethylate H3 'Lys-4' nor 'Lys-79'.</text>
</comment>
<comment type="catalytic activity">
    <reaction evidence="4">
        <text>N(6),N(6)-dimethyl-L-lysyl(36)-[histone H3] + 2 2-oxoglutarate + 2 O2 = L-lysyl(36)-[histone H3] + 2 formaldehyde + 2 succinate + 2 CO2</text>
        <dbReference type="Rhea" id="RHEA:42032"/>
        <dbReference type="Rhea" id="RHEA-COMP:9785"/>
        <dbReference type="Rhea" id="RHEA-COMP:9787"/>
        <dbReference type="ChEBI" id="CHEBI:15379"/>
        <dbReference type="ChEBI" id="CHEBI:16526"/>
        <dbReference type="ChEBI" id="CHEBI:16810"/>
        <dbReference type="ChEBI" id="CHEBI:16842"/>
        <dbReference type="ChEBI" id="CHEBI:29969"/>
        <dbReference type="ChEBI" id="CHEBI:30031"/>
        <dbReference type="ChEBI" id="CHEBI:61976"/>
        <dbReference type="EC" id="1.14.11.27"/>
    </reaction>
</comment>
<comment type="cofactor">
    <cofactor evidence="1">
        <name>Fe(2+)</name>
        <dbReference type="ChEBI" id="CHEBI:29033"/>
    </cofactor>
    <text evidence="1">Binds 1 Fe(2+) ion per subunit.</text>
</comment>
<comment type="subcellular location">
    <subcellularLocation>
        <location evidence="1">Nucleus</location>
    </subcellularLocation>
</comment>
<comment type="domain">
    <text evidence="1">The JmjC domain mediates the demethylation activity.</text>
</comment>
<comment type="miscellaneous">
    <text evidence="3">Present with 784 molecules/cell in log phase SD medium.</text>
</comment>
<comment type="similarity">
    <text evidence="5">Belongs to the JHDM1 histone demethylase family.</text>
</comment>